<gene>
    <name type="primary">nad2</name>
</gene>
<sequence>MVCLFENLMNMIKYSIYILPLIILIVLSISIKKDVQRVHIIIQSLKLTLIVIMIVIGIEESIYVKLNGHLIKTELIKLFEYLLLGVSYMIIKMFEEGVTEGKKTKITDEGLILIYSSIIGMLISMEAHNLITLFLSLEISSICFYILALNKNSRKGIEGGLKYYIIGGIATTILLLGIVSIYKSTGSLMYTDLLVIVMENTDDYRIQMGIALIVLGLILKLGIAPFHGWLIDVYEGAGMLMTFYLTITQKLVTLMVLINLYQNLIIYTNAIMFTNGLIILILVTLVVGTIGSLRQQKLIRFIAYSAIVNSALLILMLAGSMSEELMVNSVYYLINYIIGLTVLMSLIMGFLRLNDRGTIEDIYQLKNMWVINMFGAIVYILVLMYLAGLPPMTNFISKILILLPYMVLGRVYLTMLAFFLSVGVMIYYMNLVKIIIIDKVQTHEQGVAELEITSKPTKGGRRIVLGVMWLIFSQLYLDEILNVIKVIVALI</sequence>
<feature type="chain" id="PRO_0000312391" description="NADH-ubiquinone oxidoreductase chain 2">
    <location>
        <begin position="1"/>
        <end position="491"/>
    </location>
</feature>
<feature type="transmembrane region" description="Helical" evidence="2">
    <location>
        <begin position="11"/>
        <end position="31"/>
    </location>
</feature>
<feature type="transmembrane region" description="Helical" evidence="2">
    <location>
        <begin position="38"/>
        <end position="58"/>
    </location>
</feature>
<feature type="transmembrane region" description="Helical" evidence="2">
    <location>
        <begin position="74"/>
        <end position="94"/>
    </location>
</feature>
<feature type="transmembrane region" description="Helical" evidence="2">
    <location>
        <begin position="106"/>
        <end position="126"/>
    </location>
</feature>
<feature type="transmembrane region" description="Helical" evidence="2">
    <location>
        <begin position="129"/>
        <end position="149"/>
    </location>
</feature>
<feature type="transmembrane region" description="Helical" evidence="2">
    <location>
        <begin position="161"/>
        <end position="181"/>
    </location>
</feature>
<feature type="transmembrane region" description="Helical" evidence="2">
    <location>
        <begin position="210"/>
        <end position="230"/>
    </location>
</feature>
<feature type="transmembrane region" description="Helical" evidence="2">
    <location>
        <begin position="238"/>
        <end position="258"/>
    </location>
</feature>
<feature type="transmembrane region" description="Helical" evidence="2">
    <location>
        <begin position="270"/>
        <end position="290"/>
    </location>
</feature>
<feature type="transmembrane region" description="Helical" evidence="2">
    <location>
        <begin position="298"/>
        <end position="318"/>
    </location>
</feature>
<feature type="transmembrane region" description="Helical" evidence="2">
    <location>
        <begin position="330"/>
        <end position="350"/>
    </location>
</feature>
<feature type="transmembrane region" description="Helical" evidence="2">
    <location>
        <begin position="375"/>
        <end position="395"/>
    </location>
</feature>
<feature type="transmembrane region" description="Helical" evidence="2">
    <location>
        <begin position="411"/>
        <end position="433"/>
    </location>
</feature>
<feature type="transmembrane region" description="Helical" evidence="2">
    <location>
        <begin position="463"/>
        <end position="483"/>
    </location>
</feature>
<name>NU2M_DICCI</name>
<proteinExistence type="inferred from homology"/>
<dbReference type="EC" id="7.1.1.2"/>
<dbReference type="EMBL" id="DQ336395">
    <property type="protein sequence ID" value="ABC60395.1"/>
    <property type="molecule type" value="Genomic_DNA"/>
</dbReference>
<dbReference type="RefSeq" id="YP_492644.1">
    <property type="nucleotide sequence ID" value="NC_007787.2"/>
</dbReference>
<dbReference type="SMR" id="Q2LCP8"/>
<dbReference type="GeneID" id="3912632"/>
<dbReference type="GO" id="GO:0005743">
    <property type="term" value="C:mitochondrial inner membrane"/>
    <property type="evidence" value="ECO:0007669"/>
    <property type="project" value="UniProtKB-SubCell"/>
</dbReference>
<dbReference type="GO" id="GO:0008137">
    <property type="term" value="F:NADH dehydrogenase (ubiquinone) activity"/>
    <property type="evidence" value="ECO:0007669"/>
    <property type="project" value="UniProtKB-EC"/>
</dbReference>
<dbReference type="InterPro" id="IPR001750">
    <property type="entry name" value="ND/Mrp_TM"/>
</dbReference>
<dbReference type="PANTHER" id="PTHR22773">
    <property type="entry name" value="NADH DEHYDROGENASE"/>
    <property type="match status" value="1"/>
</dbReference>
<dbReference type="Pfam" id="PF00361">
    <property type="entry name" value="Proton_antipo_M"/>
    <property type="match status" value="1"/>
</dbReference>
<evidence type="ECO:0000250" key="1"/>
<evidence type="ECO:0000255" key="2"/>
<evidence type="ECO:0000305" key="3"/>
<accession>Q2LCP8</accession>
<organism>
    <name type="scientific">Dictyostelium citrinum</name>
    <name type="common">Slime mold</name>
    <dbReference type="NCBI Taxonomy" id="361072"/>
    <lineage>
        <taxon>Eukaryota</taxon>
        <taxon>Amoebozoa</taxon>
        <taxon>Evosea</taxon>
        <taxon>Eumycetozoa</taxon>
        <taxon>Dictyostelia</taxon>
        <taxon>Dictyosteliales</taxon>
        <taxon>Dictyosteliaceae</taxon>
        <taxon>Dictyostelium</taxon>
    </lineage>
</organism>
<comment type="function">
    <text evidence="1">Core subunit of the mitochondrial membrane respiratory chain NADH dehydrogenase (Complex I) that is believed to belong to the minimal assembly required for catalysis. Complex I functions in the transfer of electrons from NADH to the respiratory chain. The immediate electron acceptor for the enzyme is believed to be ubiquinone (By similarity).</text>
</comment>
<comment type="catalytic activity">
    <reaction>
        <text>a ubiquinone + NADH + 5 H(+)(in) = a ubiquinol + NAD(+) + 4 H(+)(out)</text>
        <dbReference type="Rhea" id="RHEA:29091"/>
        <dbReference type="Rhea" id="RHEA-COMP:9565"/>
        <dbReference type="Rhea" id="RHEA-COMP:9566"/>
        <dbReference type="ChEBI" id="CHEBI:15378"/>
        <dbReference type="ChEBI" id="CHEBI:16389"/>
        <dbReference type="ChEBI" id="CHEBI:17976"/>
        <dbReference type="ChEBI" id="CHEBI:57540"/>
        <dbReference type="ChEBI" id="CHEBI:57945"/>
        <dbReference type="EC" id="7.1.1.2"/>
    </reaction>
</comment>
<comment type="subcellular location">
    <subcellularLocation>
        <location>Mitochondrion inner membrane</location>
        <topology>Multi-pass membrane protein</topology>
    </subcellularLocation>
</comment>
<comment type="similarity">
    <text evidence="3">Belongs to the complex I subunit 2 family.</text>
</comment>
<protein>
    <recommendedName>
        <fullName>NADH-ubiquinone oxidoreductase chain 2</fullName>
        <ecNumber>7.1.1.2</ecNumber>
    </recommendedName>
    <alternativeName>
        <fullName>NADH dehydrogenase subunit 2</fullName>
    </alternativeName>
</protein>
<reference key="1">
    <citation type="journal article" date="2008" name="Mol. Biol. Evol.">
        <title>Mitochondrial genome evolution in the social amoebae.</title>
        <authorList>
            <person name="Heidel A.J."/>
            <person name="Gloeckner G."/>
        </authorList>
    </citation>
    <scope>NUCLEOTIDE SEQUENCE [LARGE SCALE GENOMIC DNA]</scope>
</reference>
<geneLocation type="mitochondrion"/>
<keyword id="KW-0249">Electron transport</keyword>
<keyword id="KW-0472">Membrane</keyword>
<keyword id="KW-0496">Mitochondrion</keyword>
<keyword id="KW-0999">Mitochondrion inner membrane</keyword>
<keyword id="KW-0520">NAD</keyword>
<keyword id="KW-0679">Respiratory chain</keyword>
<keyword id="KW-1278">Translocase</keyword>
<keyword id="KW-0812">Transmembrane</keyword>
<keyword id="KW-1133">Transmembrane helix</keyword>
<keyword id="KW-0813">Transport</keyword>
<keyword id="KW-0830">Ubiquinone</keyword>